<keyword id="KW-1185">Reference proteome</keyword>
<sequence>MSQQTTPAEQKSLQRKKPPFRADQVGSLLRSEPVKKARLQKAAGEMTAEQLRQIENDEIIRIVEKQKETGLNVVTDGEFRRAWWHFDFLENLDGVEPFTPEQGIQFHNVQTKARGIKVTGDIDFSTHPMLEDYSFLHSIAGDATPKMTIPSPNMLFFRGKLEKDEYKNDYQLFQHDVSKAYKKAIQAFYDRGCRYLQLDDTAWAVFLSEKGLKQIEAFGTTPDELRQLFAKSINDAIADRPDDLTVTMHICRGNFQSTWTAEGGYDAAAETIFDGLNLDGLFLEYDDSRSGGFEPLRYVKRSDLQLVLGLVTSKFGELENPDDVKRRIEEASRYVSLDQLCLSPQCGFASTEEGNKLTEEQQWAKLRHVVEIANDVWK</sequence>
<reference key="1">
    <citation type="journal article" date="1996" name="Microbiology">
        <title>Sequencing of a 65 kb region of the Bacillus subtilis genome containing the lic and cel loci, and creation of a 177 kb contig covering the gnt-sacXY region.</title>
        <authorList>
            <person name="Yoshida K."/>
            <person name="Shindo K."/>
            <person name="Sano H."/>
            <person name="Seki S."/>
            <person name="Fujimura M."/>
            <person name="Yanai N."/>
            <person name="Miwa Y."/>
            <person name="Fujita Y."/>
        </authorList>
    </citation>
    <scope>NUCLEOTIDE SEQUENCE [GENOMIC DNA]</scope>
    <source>
        <strain>168 / BGSC1A1</strain>
    </source>
</reference>
<reference key="2">
    <citation type="journal article" date="1997" name="Nature">
        <title>The complete genome sequence of the Gram-positive bacterium Bacillus subtilis.</title>
        <authorList>
            <person name="Kunst F."/>
            <person name="Ogasawara N."/>
            <person name="Moszer I."/>
            <person name="Albertini A.M."/>
            <person name="Alloni G."/>
            <person name="Azevedo V."/>
            <person name="Bertero M.G."/>
            <person name="Bessieres P."/>
            <person name="Bolotin A."/>
            <person name="Borchert S."/>
            <person name="Borriss R."/>
            <person name="Boursier L."/>
            <person name="Brans A."/>
            <person name="Braun M."/>
            <person name="Brignell S.C."/>
            <person name="Bron S."/>
            <person name="Brouillet S."/>
            <person name="Bruschi C.V."/>
            <person name="Caldwell B."/>
            <person name="Capuano V."/>
            <person name="Carter N.M."/>
            <person name="Choi S.-K."/>
            <person name="Codani J.-J."/>
            <person name="Connerton I.F."/>
            <person name="Cummings N.J."/>
            <person name="Daniel R.A."/>
            <person name="Denizot F."/>
            <person name="Devine K.M."/>
            <person name="Duesterhoeft A."/>
            <person name="Ehrlich S.D."/>
            <person name="Emmerson P.T."/>
            <person name="Entian K.-D."/>
            <person name="Errington J."/>
            <person name="Fabret C."/>
            <person name="Ferrari E."/>
            <person name="Foulger D."/>
            <person name="Fritz C."/>
            <person name="Fujita M."/>
            <person name="Fujita Y."/>
            <person name="Fuma S."/>
            <person name="Galizzi A."/>
            <person name="Galleron N."/>
            <person name="Ghim S.-Y."/>
            <person name="Glaser P."/>
            <person name="Goffeau A."/>
            <person name="Golightly E.J."/>
            <person name="Grandi G."/>
            <person name="Guiseppi G."/>
            <person name="Guy B.J."/>
            <person name="Haga K."/>
            <person name="Haiech J."/>
            <person name="Harwood C.R."/>
            <person name="Henaut A."/>
            <person name="Hilbert H."/>
            <person name="Holsappel S."/>
            <person name="Hosono S."/>
            <person name="Hullo M.-F."/>
            <person name="Itaya M."/>
            <person name="Jones L.-M."/>
            <person name="Joris B."/>
            <person name="Karamata D."/>
            <person name="Kasahara Y."/>
            <person name="Klaerr-Blanchard M."/>
            <person name="Klein C."/>
            <person name="Kobayashi Y."/>
            <person name="Koetter P."/>
            <person name="Koningstein G."/>
            <person name="Krogh S."/>
            <person name="Kumano M."/>
            <person name="Kurita K."/>
            <person name="Lapidus A."/>
            <person name="Lardinois S."/>
            <person name="Lauber J."/>
            <person name="Lazarevic V."/>
            <person name="Lee S.-M."/>
            <person name="Levine A."/>
            <person name="Liu H."/>
            <person name="Masuda S."/>
            <person name="Mauel C."/>
            <person name="Medigue C."/>
            <person name="Medina N."/>
            <person name="Mellado R.P."/>
            <person name="Mizuno M."/>
            <person name="Moestl D."/>
            <person name="Nakai S."/>
            <person name="Noback M."/>
            <person name="Noone D."/>
            <person name="O'Reilly M."/>
            <person name="Ogawa K."/>
            <person name="Ogiwara A."/>
            <person name="Oudega B."/>
            <person name="Park S.-H."/>
            <person name="Parro V."/>
            <person name="Pohl T.M."/>
            <person name="Portetelle D."/>
            <person name="Porwollik S."/>
            <person name="Prescott A.M."/>
            <person name="Presecan E."/>
            <person name="Pujic P."/>
            <person name="Purnelle B."/>
            <person name="Rapoport G."/>
            <person name="Rey M."/>
            <person name="Reynolds S."/>
            <person name="Rieger M."/>
            <person name="Rivolta C."/>
            <person name="Rocha E."/>
            <person name="Roche B."/>
            <person name="Rose M."/>
            <person name="Sadaie Y."/>
            <person name="Sato T."/>
            <person name="Scanlan E."/>
            <person name="Schleich S."/>
            <person name="Schroeter R."/>
            <person name="Scoffone F."/>
            <person name="Sekiguchi J."/>
            <person name="Sekowska A."/>
            <person name="Seror S.J."/>
            <person name="Serror P."/>
            <person name="Shin B.-S."/>
            <person name="Soldo B."/>
            <person name="Sorokin A."/>
            <person name="Tacconi E."/>
            <person name="Takagi T."/>
            <person name="Takahashi H."/>
            <person name="Takemaru K."/>
            <person name="Takeuchi M."/>
            <person name="Tamakoshi A."/>
            <person name="Tanaka T."/>
            <person name="Terpstra P."/>
            <person name="Tognoni A."/>
            <person name="Tosato V."/>
            <person name="Uchiyama S."/>
            <person name="Vandenbol M."/>
            <person name="Vannier F."/>
            <person name="Vassarotti A."/>
            <person name="Viari A."/>
            <person name="Wambutt R."/>
            <person name="Wedler E."/>
            <person name="Wedler H."/>
            <person name="Weitzenegger T."/>
            <person name="Winters P."/>
            <person name="Wipat A."/>
            <person name="Yamamoto H."/>
            <person name="Yamane K."/>
            <person name="Yasumoto K."/>
            <person name="Yata K."/>
            <person name="Yoshida K."/>
            <person name="Yoshikawa H.-F."/>
            <person name="Zumstein E."/>
            <person name="Yoshikawa H."/>
            <person name="Danchin A."/>
        </authorList>
    </citation>
    <scope>NUCLEOTIDE SEQUENCE [LARGE SCALE GENOMIC DNA]</scope>
    <source>
        <strain>168</strain>
    </source>
</reference>
<reference key="3">
    <citation type="journal article" date="1999" name="Genome Res.">
        <title>Detecting and analyzing DNA sequencing errors: toward a higher quality of the Bacillus subtilis genome sequence.</title>
        <authorList>
            <person name="Medigue C."/>
            <person name="Rose M."/>
            <person name="Viari A."/>
            <person name="Danchin A."/>
        </authorList>
    </citation>
    <scope>SEQUENCE REVISION</scope>
</reference>
<reference key="4">
    <citation type="journal article" date="2009" name="Microbiology">
        <title>From a consortium sequence to a unified sequence: the Bacillus subtilis 168 reference genome a decade later.</title>
        <authorList>
            <person name="Barbe V."/>
            <person name="Cruveiller S."/>
            <person name="Kunst F."/>
            <person name="Lenoble P."/>
            <person name="Meurice G."/>
            <person name="Sekowska A."/>
            <person name="Vallenet D."/>
            <person name="Wang T."/>
            <person name="Moszer I."/>
            <person name="Medigue C."/>
            <person name="Danchin A."/>
        </authorList>
    </citation>
    <scope>SEQUENCE REVISION TO 334</scope>
</reference>
<gene>
    <name type="primary">yxjG</name>
    <name type="ordered locus">BSU38960</name>
    <name type="ORF">N15NR</name>
</gene>
<proteinExistence type="predicted"/>
<accession>P42318</accession>
<comment type="similarity">
    <text evidence="2">To B.subtilis YxjH.</text>
</comment>
<name>YXJG_BACSU</name>
<dbReference type="EMBL" id="D83026">
    <property type="protein sequence ID" value="BAA11708.1"/>
    <property type="molecule type" value="Genomic_DNA"/>
</dbReference>
<dbReference type="EMBL" id="AL009126">
    <property type="protein sequence ID" value="CAB15922.3"/>
    <property type="molecule type" value="Genomic_DNA"/>
</dbReference>
<dbReference type="PIR" id="E70079">
    <property type="entry name" value="E70079"/>
</dbReference>
<dbReference type="RefSeq" id="NP_391775.3">
    <property type="nucleotide sequence ID" value="NC_000964.3"/>
</dbReference>
<dbReference type="RefSeq" id="WP_003244221.1">
    <property type="nucleotide sequence ID" value="NZ_OZ025638.1"/>
</dbReference>
<dbReference type="SMR" id="P42318"/>
<dbReference type="FunCoup" id="P42318">
    <property type="interactions" value="46"/>
</dbReference>
<dbReference type="IntAct" id="P42318">
    <property type="interactions" value="1"/>
</dbReference>
<dbReference type="MINT" id="P42318"/>
<dbReference type="STRING" id="224308.BSU38960"/>
<dbReference type="PaxDb" id="224308-BSU38960"/>
<dbReference type="EnsemblBacteria" id="CAB15922">
    <property type="protein sequence ID" value="CAB15922"/>
    <property type="gene ID" value="BSU_38960"/>
</dbReference>
<dbReference type="GeneID" id="937457"/>
<dbReference type="KEGG" id="bsu:BSU38960"/>
<dbReference type="PATRIC" id="fig|224308.179.peg.4216"/>
<dbReference type="eggNOG" id="COG0620">
    <property type="taxonomic scope" value="Bacteria"/>
</dbReference>
<dbReference type="InParanoid" id="P42318"/>
<dbReference type="OrthoDB" id="6430685at2"/>
<dbReference type="PhylomeDB" id="P42318"/>
<dbReference type="BioCyc" id="BSUB:BSU38960-MONOMER"/>
<dbReference type="Proteomes" id="UP000001570">
    <property type="component" value="Chromosome"/>
</dbReference>
<dbReference type="GO" id="GO:0003871">
    <property type="term" value="F:5-methyltetrahydropteroyltriglutamate-homocysteine S-methyltransferase activity"/>
    <property type="evidence" value="ECO:0007669"/>
    <property type="project" value="InterPro"/>
</dbReference>
<dbReference type="GO" id="GO:0008270">
    <property type="term" value="F:zinc ion binding"/>
    <property type="evidence" value="ECO:0007669"/>
    <property type="project" value="InterPro"/>
</dbReference>
<dbReference type="GO" id="GO:0009086">
    <property type="term" value="P:methionine biosynthetic process"/>
    <property type="evidence" value="ECO:0007669"/>
    <property type="project" value="InterPro"/>
</dbReference>
<dbReference type="CDD" id="cd03311">
    <property type="entry name" value="CIMS_C_terminal_like"/>
    <property type="match status" value="1"/>
</dbReference>
<dbReference type="Gene3D" id="3.20.20.210">
    <property type="match status" value="1"/>
</dbReference>
<dbReference type="InterPro" id="IPR002629">
    <property type="entry name" value="Met_Synth_C/arc"/>
</dbReference>
<dbReference type="InterPro" id="IPR038071">
    <property type="entry name" value="UROD/MetE-like_sf"/>
</dbReference>
<dbReference type="NCBIfam" id="NF005085">
    <property type="entry name" value="PRK06520.1"/>
    <property type="match status" value="1"/>
</dbReference>
<dbReference type="PANTHER" id="PTHR43844">
    <property type="entry name" value="METHIONINE SYNTHASE"/>
    <property type="match status" value="1"/>
</dbReference>
<dbReference type="PANTHER" id="PTHR43844:SF1">
    <property type="entry name" value="METHIONINE SYNTHASE"/>
    <property type="match status" value="1"/>
</dbReference>
<dbReference type="Pfam" id="PF01717">
    <property type="entry name" value="Meth_synt_2"/>
    <property type="match status" value="1"/>
</dbReference>
<dbReference type="SUPFAM" id="SSF51726">
    <property type="entry name" value="UROD/MetE-like"/>
    <property type="match status" value="1"/>
</dbReference>
<feature type="chain" id="PRO_0000050035" description="Uncharacterized protein YxjG">
    <location>
        <begin position="1"/>
        <end position="378"/>
    </location>
</feature>
<feature type="region of interest" description="Disordered" evidence="1">
    <location>
        <begin position="1"/>
        <end position="33"/>
    </location>
</feature>
<feature type="compositionally biased region" description="Polar residues" evidence="1">
    <location>
        <begin position="1"/>
        <end position="11"/>
    </location>
</feature>
<feature type="sequence conflict" description="In Ref. 1; BAA11708." evidence="2" ref="1">
    <original>RRIEEASRYVSLDQLCLSPQCGFASTEEGNKLTEEQQWAKLRHVVEIANDVWK</original>
    <variation>AVSKKRPVM</variation>
    <location>
        <begin position="326"/>
        <end position="378"/>
    </location>
</feature>
<protein>
    <recommendedName>
        <fullName>Uncharacterized protein YxjG</fullName>
    </recommendedName>
</protein>
<evidence type="ECO:0000256" key="1">
    <source>
        <dbReference type="SAM" id="MobiDB-lite"/>
    </source>
</evidence>
<evidence type="ECO:0000305" key="2"/>
<organism>
    <name type="scientific">Bacillus subtilis (strain 168)</name>
    <dbReference type="NCBI Taxonomy" id="224308"/>
    <lineage>
        <taxon>Bacteria</taxon>
        <taxon>Bacillati</taxon>
        <taxon>Bacillota</taxon>
        <taxon>Bacilli</taxon>
        <taxon>Bacillales</taxon>
        <taxon>Bacillaceae</taxon>
        <taxon>Bacillus</taxon>
    </lineage>
</organism>